<keyword id="KW-0408">Iron</keyword>
<sequence length="90" mass="10297">MARNVQCIKLGCEAEGLDFPPYPGELGKRIFENVSREAWGQWIKHQTMLVNEMRLSMADIKARKYLATQMEAYFFGEGAEQPVGYVPPEK</sequence>
<name>FETP_NITEC</name>
<reference key="1">
    <citation type="journal article" date="2007" name="Environ. Microbiol.">
        <title>Whole-genome analysis of the ammonia-oxidizing bacterium, Nitrosomonas eutropha C91: implications for niche adaptation.</title>
        <authorList>
            <person name="Stein L.Y."/>
            <person name="Arp D.J."/>
            <person name="Berube P.M."/>
            <person name="Chain P.S."/>
            <person name="Hauser L."/>
            <person name="Jetten M.S."/>
            <person name="Klotz M.G."/>
            <person name="Larimer F.W."/>
            <person name="Norton J.M."/>
            <person name="Op den Camp H.J.M."/>
            <person name="Shin M."/>
            <person name="Wei X."/>
        </authorList>
    </citation>
    <scope>NUCLEOTIDE SEQUENCE [LARGE SCALE GENOMIC DNA]</scope>
    <source>
        <strain>DSM 101675 / C91 / Nm57</strain>
    </source>
</reference>
<dbReference type="EMBL" id="CP000450">
    <property type="protein sequence ID" value="ABI58630.1"/>
    <property type="molecule type" value="Genomic_DNA"/>
</dbReference>
<dbReference type="RefSeq" id="WP_011633473.1">
    <property type="nucleotide sequence ID" value="NC_008344.1"/>
</dbReference>
<dbReference type="SMR" id="Q0AJ41"/>
<dbReference type="STRING" id="335283.Neut_0350"/>
<dbReference type="KEGG" id="net:Neut_0350"/>
<dbReference type="eggNOG" id="COG2924">
    <property type="taxonomic scope" value="Bacteria"/>
</dbReference>
<dbReference type="HOGENOM" id="CLU_170994_0_0_4"/>
<dbReference type="OrthoDB" id="9804318at2"/>
<dbReference type="Proteomes" id="UP000001966">
    <property type="component" value="Chromosome"/>
</dbReference>
<dbReference type="GO" id="GO:0005829">
    <property type="term" value="C:cytosol"/>
    <property type="evidence" value="ECO:0007669"/>
    <property type="project" value="TreeGrafter"/>
</dbReference>
<dbReference type="GO" id="GO:0005506">
    <property type="term" value="F:iron ion binding"/>
    <property type="evidence" value="ECO:0007669"/>
    <property type="project" value="UniProtKB-UniRule"/>
</dbReference>
<dbReference type="GO" id="GO:0034599">
    <property type="term" value="P:cellular response to oxidative stress"/>
    <property type="evidence" value="ECO:0007669"/>
    <property type="project" value="TreeGrafter"/>
</dbReference>
<dbReference type="FunFam" id="1.10.3880.10:FF:000001">
    <property type="entry name" value="Probable Fe(2+)-trafficking protein"/>
    <property type="match status" value="1"/>
</dbReference>
<dbReference type="Gene3D" id="1.10.3880.10">
    <property type="entry name" value="Fe(II) trafficking protein YggX"/>
    <property type="match status" value="1"/>
</dbReference>
<dbReference type="HAMAP" id="MF_00686">
    <property type="entry name" value="Fe_traffic_YggX"/>
    <property type="match status" value="1"/>
</dbReference>
<dbReference type="InterPro" id="IPR007457">
    <property type="entry name" value="Fe_traffick_prot_YggX"/>
</dbReference>
<dbReference type="InterPro" id="IPR036766">
    <property type="entry name" value="Fe_traffick_prot_YggX_sf"/>
</dbReference>
<dbReference type="NCBIfam" id="NF003817">
    <property type="entry name" value="PRK05408.1"/>
    <property type="match status" value="1"/>
</dbReference>
<dbReference type="PANTHER" id="PTHR36965">
    <property type="entry name" value="FE(2+)-TRAFFICKING PROTEIN-RELATED"/>
    <property type="match status" value="1"/>
</dbReference>
<dbReference type="PANTHER" id="PTHR36965:SF1">
    <property type="entry name" value="FE(2+)-TRAFFICKING PROTEIN-RELATED"/>
    <property type="match status" value="1"/>
</dbReference>
<dbReference type="Pfam" id="PF04362">
    <property type="entry name" value="Iron_traffic"/>
    <property type="match status" value="1"/>
</dbReference>
<dbReference type="PIRSF" id="PIRSF029827">
    <property type="entry name" value="Fe_traffic_YggX"/>
    <property type="match status" value="1"/>
</dbReference>
<dbReference type="SUPFAM" id="SSF111148">
    <property type="entry name" value="YggX-like"/>
    <property type="match status" value="1"/>
</dbReference>
<comment type="function">
    <text evidence="1">Could be a mediator in iron transactions between iron acquisition and iron-requiring processes, such as synthesis and/or repair of Fe-S clusters in biosynthetic enzymes.</text>
</comment>
<comment type="similarity">
    <text evidence="1">Belongs to the Fe(2+)-trafficking protein family.</text>
</comment>
<organism>
    <name type="scientific">Nitrosomonas eutropha (strain DSM 101675 / C91 / Nm57)</name>
    <dbReference type="NCBI Taxonomy" id="335283"/>
    <lineage>
        <taxon>Bacteria</taxon>
        <taxon>Pseudomonadati</taxon>
        <taxon>Pseudomonadota</taxon>
        <taxon>Betaproteobacteria</taxon>
        <taxon>Nitrosomonadales</taxon>
        <taxon>Nitrosomonadaceae</taxon>
        <taxon>Nitrosomonas</taxon>
    </lineage>
</organism>
<feature type="chain" id="PRO_1000045048" description="Probable Fe(2+)-trafficking protein">
    <location>
        <begin position="1"/>
        <end position="90"/>
    </location>
</feature>
<gene>
    <name type="ordered locus">Neut_0350</name>
</gene>
<evidence type="ECO:0000255" key="1">
    <source>
        <dbReference type="HAMAP-Rule" id="MF_00686"/>
    </source>
</evidence>
<accession>Q0AJ41</accession>
<proteinExistence type="inferred from homology"/>
<protein>
    <recommendedName>
        <fullName evidence="1">Probable Fe(2+)-trafficking protein</fullName>
    </recommendedName>
</protein>